<evidence type="ECO:0000255" key="1">
    <source>
        <dbReference type="HAMAP-Rule" id="MF_01153"/>
    </source>
</evidence>
<name>DJLA_YERPS</name>
<dbReference type="EMBL" id="BX936398">
    <property type="protein sequence ID" value="CAH19877.1"/>
    <property type="molecule type" value="Genomic_DNA"/>
</dbReference>
<dbReference type="RefSeq" id="WP_011191713.1">
    <property type="nucleotide sequence ID" value="NC_006155.1"/>
</dbReference>
<dbReference type="SMR" id="Q66EQ5"/>
<dbReference type="KEGG" id="ypo:BZ17_1920"/>
<dbReference type="KEGG" id="yps:YPTB0637"/>
<dbReference type="PATRIC" id="fig|273123.14.peg.2040"/>
<dbReference type="Proteomes" id="UP000001011">
    <property type="component" value="Chromosome"/>
</dbReference>
<dbReference type="GO" id="GO:0005886">
    <property type="term" value="C:plasma membrane"/>
    <property type="evidence" value="ECO:0007669"/>
    <property type="project" value="UniProtKB-SubCell"/>
</dbReference>
<dbReference type="GO" id="GO:0051087">
    <property type="term" value="F:protein-folding chaperone binding"/>
    <property type="evidence" value="ECO:0007669"/>
    <property type="project" value="InterPro"/>
</dbReference>
<dbReference type="CDD" id="cd06257">
    <property type="entry name" value="DnaJ"/>
    <property type="match status" value="1"/>
</dbReference>
<dbReference type="CDD" id="cd07316">
    <property type="entry name" value="terB_like_DjlA"/>
    <property type="match status" value="1"/>
</dbReference>
<dbReference type="FunFam" id="1.10.287.110:FF:000011">
    <property type="entry name" value="Co-chaperone protein DjlA"/>
    <property type="match status" value="1"/>
</dbReference>
<dbReference type="FunFam" id="1.10.3680.10:FF:000001">
    <property type="entry name" value="Co-chaperone protein DjlA"/>
    <property type="match status" value="1"/>
</dbReference>
<dbReference type="Gene3D" id="1.10.287.110">
    <property type="entry name" value="DnaJ domain"/>
    <property type="match status" value="1"/>
</dbReference>
<dbReference type="Gene3D" id="1.10.3680.10">
    <property type="entry name" value="TerB-like"/>
    <property type="match status" value="1"/>
</dbReference>
<dbReference type="HAMAP" id="MF_01153">
    <property type="entry name" value="DjlA"/>
    <property type="match status" value="1"/>
</dbReference>
<dbReference type="InterPro" id="IPR023749">
    <property type="entry name" value="DjlA"/>
</dbReference>
<dbReference type="InterPro" id="IPR050817">
    <property type="entry name" value="DjlA_DnaK_co-chaperone"/>
</dbReference>
<dbReference type="InterPro" id="IPR007791">
    <property type="entry name" value="DjlA_N"/>
</dbReference>
<dbReference type="InterPro" id="IPR001623">
    <property type="entry name" value="DnaJ_domain"/>
</dbReference>
<dbReference type="InterPro" id="IPR036869">
    <property type="entry name" value="J_dom_sf"/>
</dbReference>
<dbReference type="InterPro" id="IPR029024">
    <property type="entry name" value="TerB-like"/>
</dbReference>
<dbReference type="NCBIfam" id="NF006948">
    <property type="entry name" value="PRK09430.1"/>
    <property type="match status" value="1"/>
</dbReference>
<dbReference type="PANTHER" id="PTHR24074">
    <property type="entry name" value="CO-CHAPERONE PROTEIN DJLA"/>
    <property type="match status" value="1"/>
</dbReference>
<dbReference type="Pfam" id="PF00226">
    <property type="entry name" value="DnaJ"/>
    <property type="match status" value="1"/>
</dbReference>
<dbReference type="Pfam" id="PF05099">
    <property type="entry name" value="TerB"/>
    <property type="match status" value="1"/>
</dbReference>
<dbReference type="PRINTS" id="PR00625">
    <property type="entry name" value="JDOMAIN"/>
</dbReference>
<dbReference type="SMART" id="SM00271">
    <property type="entry name" value="DnaJ"/>
    <property type="match status" value="1"/>
</dbReference>
<dbReference type="SUPFAM" id="SSF46565">
    <property type="entry name" value="Chaperone J-domain"/>
    <property type="match status" value="1"/>
</dbReference>
<dbReference type="PROSITE" id="PS50076">
    <property type="entry name" value="DNAJ_2"/>
    <property type="match status" value="1"/>
</dbReference>
<protein>
    <recommendedName>
        <fullName evidence="1">Co-chaperone protein DjlA</fullName>
    </recommendedName>
</protein>
<accession>Q66EQ5</accession>
<proteinExistence type="inferred from homology"/>
<reference key="1">
    <citation type="journal article" date="2004" name="Proc. Natl. Acad. Sci. U.S.A.">
        <title>Insights into the evolution of Yersinia pestis through whole-genome comparison with Yersinia pseudotuberculosis.</title>
        <authorList>
            <person name="Chain P.S.G."/>
            <person name="Carniel E."/>
            <person name="Larimer F.W."/>
            <person name="Lamerdin J."/>
            <person name="Stoutland P.O."/>
            <person name="Regala W.M."/>
            <person name="Georgescu A.M."/>
            <person name="Vergez L.M."/>
            <person name="Land M.L."/>
            <person name="Motin V.L."/>
            <person name="Brubaker R.R."/>
            <person name="Fowler J."/>
            <person name="Hinnebusch J."/>
            <person name="Marceau M."/>
            <person name="Medigue C."/>
            <person name="Simonet M."/>
            <person name="Chenal-Francisque V."/>
            <person name="Souza B."/>
            <person name="Dacheux D."/>
            <person name="Elliott J.M."/>
            <person name="Derbise A."/>
            <person name="Hauser L.J."/>
            <person name="Garcia E."/>
        </authorList>
    </citation>
    <scope>NUCLEOTIDE SEQUENCE [LARGE SCALE GENOMIC DNA]</scope>
    <source>
        <strain>IP32953</strain>
    </source>
</reference>
<comment type="function">
    <text evidence="1">Regulatory DnaK co-chaperone. Direct interaction between DnaK and DjlA is needed for the induction of the wcaABCDE operon, involved in the synthesis of a colanic acid polysaccharide capsule, possibly through activation of the RcsB/RcsC phosphotransfer signaling pathway. The colanic acid capsule may help the bacterium survive conditions outside the host.</text>
</comment>
<comment type="subunit">
    <text evidence="1">Homodimer.</text>
</comment>
<comment type="subcellular location">
    <subcellularLocation>
        <location evidence="1">Cell inner membrane</location>
        <topology evidence="1">Single-pass type III membrane protein</topology>
    </subcellularLocation>
</comment>
<comment type="domain">
    <text evidence="1">The transmembrane domain is a dimerization domain.</text>
</comment>
<feature type="chain" id="PRO_0000209446" description="Co-chaperone protein DjlA">
    <location>
        <begin position="1"/>
        <end position="277"/>
    </location>
</feature>
<feature type="topological domain" description="Periplasmic" evidence="1">
    <location>
        <begin position="1"/>
        <end position="6"/>
    </location>
</feature>
<feature type="transmembrane region" description="Helical" evidence="1">
    <location>
        <begin position="7"/>
        <end position="31"/>
    </location>
</feature>
<feature type="topological domain" description="Cytoplasmic" evidence="1">
    <location>
        <begin position="32"/>
        <end position="277"/>
    </location>
</feature>
<feature type="domain" description="J" evidence="1">
    <location>
        <begin position="211"/>
        <end position="277"/>
    </location>
</feature>
<sequence length="277" mass="31105">MRYWGKLLGLVLGVMYAPGVVGALLGLLVGHMVDRALGAKRRGFFADQQTRQSLFFRTTFQVMGHLTKAKGRVTEVDIQLASQLMDRMQLHGAARTAAQQAFREGKESHFPLRKTLQEFRRVCFGRFDLIRIFLEIQLQAAFADGSLHPNERQVLYVIAEELGISRGQFDQFLRMFDGGRQFGGHGGWQGQQGGYSQSGYQRAPQGPTLEDACKVLGVNSSDDSVAIKRAYRKLMGEHHPDKLVAKGLPPEMMEMAKQKAQEIQAAYDLIKREKGFK</sequence>
<organism>
    <name type="scientific">Yersinia pseudotuberculosis serotype I (strain IP32953)</name>
    <dbReference type="NCBI Taxonomy" id="273123"/>
    <lineage>
        <taxon>Bacteria</taxon>
        <taxon>Pseudomonadati</taxon>
        <taxon>Pseudomonadota</taxon>
        <taxon>Gammaproteobacteria</taxon>
        <taxon>Enterobacterales</taxon>
        <taxon>Yersiniaceae</taxon>
        <taxon>Yersinia</taxon>
    </lineage>
</organism>
<keyword id="KW-0997">Cell inner membrane</keyword>
<keyword id="KW-1003">Cell membrane</keyword>
<keyword id="KW-0143">Chaperone</keyword>
<keyword id="KW-0472">Membrane</keyword>
<keyword id="KW-0812">Transmembrane</keyword>
<keyword id="KW-1133">Transmembrane helix</keyword>
<gene>
    <name evidence="1" type="primary">djlA</name>
    <name type="ordered locus">YPTB0637</name>
</gene>